<reference key="1">
    <citation type="journal article" date="2002" name="Environ. Microbiol.">
        <title>Complete genome sequence and comparative analysis of the metabolically versatile Pseudomonas putida KT2440.</title>
        <authorList>
            <person name="Nelson K.E."/>
            <person name="Weinel C."/>
            <person name="Paulsen I.T."/>
            <person name="Dodson R.J."/>
            <person name="Hilbert H."/>
            <person name="Martins dos Santos V.A.P."/>
            <person name="Fouts D.E."/>
            <person name="Gill S.R."/>
            <person name="Pop M."/>
            <person name="Holmes M."/>
            <person name="Brinkac L.M."/>
            <person name="Beanan M.J."/>
            <person name="DeBoy R.T."/>
            <person name="Daugherty S.C."/>
            <person name="Kolonay J.F."/>
            <person name="Madupu R."/>
            <person name="Nelson W.C."/>
            <person name="White O."/>
            <person name="Peterson J.D."/>
            <person name="Khouri H.M."/>
            <person name="Hance I."/>
            <person name="Chris Lee P."/>
            <person name="Holtzapple E.K."/>
            <person name="Scanlan D."/>
            <person name="Tran K."/>
            <person name="Moazzez A."/>
            <person name="Utterback T.R."/>
            <person name="Rizzo M."/>
            <person name="Lee K."/>
            <person name="Kosack D."/>
            <person name="Moestl D."/>
            <person name="Wedler H."/>
            <person name="Lauber J."/>
            <person name="Stjepandic D."/>
            <person name="Hoheisel J."/>
            <person name="Straetz M."/>
            <person name="Heim S."/>
            <person name="Kiewitz C."/>
            <person name="Eisen J.A."/>
            <person name="Timmis K.N."/>
            <person name="Duesterhoeft A."/>
            <person name="Tuemmler B."/>
            <person name="Fraser C.M."/>
        </authorList>
    </citation>
    <scope>NUCLEOTIDE SEQUENCE [LARGE SCALE GENOMIC DNA]</scope>
    <source>
        <strain>ATCC 47054 / DSM 6125 / CFBP 8728 / NCIMB 11950 / KT2440</strain>
    </source>
</reference>
<name>KATG_PSEPK</name>
<sequence length="751" mass="82062">MSNESKCPFHQTAGGGTTNRDWWPDQLNLRILHQHSSKSSPDPDFDYAKAFKSLDFQALKKDLTALMTDSQDWWPADFGHYGPLFIRMAWHSAGTYRIGDGRGGAGSGQQRFAPLNSWPDNVSLDKARRLLWPIKQKYGNKISWADLIVLTGNVALESMGFKTFGFSGGRADVWEPDEDVYWGSEKVWLGGDTRYGKDQVKAQPPGQGDLVAEPAKHGEEQNRDLSAERNLENPLAAVQMGLIYVNPEGPEGNPDPVASGKDIRETFGRMAMNDEETVALIAGGHAFGKTHGAGPADNVGPEPEAAGLEMQGLGWHNTFGSGKGGDTITSGLEVTWTSTPTRWSNEYLNNLFDFEWELTKSPAGAHQWRPKDGKGAGTVPDAHDPGKRHAPSMLTSDLALRFDPIYEPIARHFKENPDQLADAFARAWYKLIHRDMGPLARYLGPEMPNEELLWQDPLPKADPSTISEQDIATLKSRILASGLSVGELVSTAWASASTFRGSDKRGGANGARLRLAPQKDWAANQGVDKVLAALEKIQGEFNSSGKKVSLADLIVLAGTAAVEKAAKDAGYSGSVGFRPGRVDASQEQTDVESFAVLEPLADGFRNFTKARYSVKAEKLLLDKAQLLTLTAPELTVLIGGLRVLGANHGGSKLGVFTDKPGTLSNDFFRNLLDMSVEWKPTSADNETFEGRDRKTGQVKWSGSRVDLVFGSHAQLRALSEVYASSDGGDKFVRDFVAAWQKVMELDRFDLK</sequence>
<proteinExistence type="inferred from homology"/>
<evidence type="ECO:0000255" key="1">
    <source>
        <dbReference type="HAMAP-Rule" id="MF_01961"/>
    </source>
</evidence>
<evidence type="ECO:0000256" key="2">
    <source>
        <dbReference type="SAM" id="MobiDB-lite"/>
    </source>
</evidence>
<protein>
    <recommendedName>
        <fullName evidence="1">Catalase-peroxidase</fullName>
        <shortName evidence="1">CP</shortName>
        <ecNumber evidence="1">1.11.1.21</ecNumber>
    </recommendedName>
    <alternativeName>
        <fullName evidence="1">Peroxidase/catalase</fullName>
    </alternativeName>
</protein>
<accession>Q88GQ0</accession>
<gene>
    <name evidence="1" type="primary">katG</name>
    <name type="ordered locus">PP_3668</name>
</gene>
<organism>
    <name type="scientific">Pseudomonas putida (strain ATCC 47054 / DSM 6125 / CFBP 8728 / NCIMB 11950 / KT2440)</name>
    <dbReference type="NCBI Taxonomy" id="160488"/>
    <lineage>
        <taxon>Bacteria</taxon>
        <taxon>Pseudomonadati</taxon>
        <taxon>Pseudomonadota</taxon>
        <taxon>Gammaproteobacteria</taxon>
        <taxon>Pseudomonadales</taxon>
        <taxon>Pseudomonadaceae</taxon>
        <taxon>Pseudomonas</taxon>
    </lineage>
</organism>
<comment type="function">
    <text evidence="1">Bifunctional enzyme with both catalase and broad-spectrum peroxidase activity.</text>
</comment>
<comment type="catalytic activity">
    <reaction evidence="1">
        <text>H2O2 + AH2 = A + 2 H2O</text>
        <dbReference type="Rhea" id="RHEA:30275"/>
        <dbReference type="ChEBI" id="CHEBI:13193"/>
        <dbReference type="ChEBI" id="CHEBI:15377"/>
        <dbReference type="ChEBI" id="CHEBI:16240"/>
        <dbReference type="ChEBI" id="CHEBI:17499"/>
        <dbReference type="EC" id="1.11.1.21"/>
    </reaction>
</comment>
<comment type="catalytic activity">
    <reaction evidence="1">
        <text>2 H2O2 = O2 + 2 H2O</text>
        <dbReference type="Rhea" id="RHEA:20309"/>
        <dbReference type="ChEBI" id="CHEBI:15377"/>
        <dbReference type="ChEBI" id="CHEBI:15379"/>
        <dbReference type="ChEBI" id="CHEBI:16240"/>
        <dbReference type="EC" id="1.11.1.21"/>
    </reaction>
</comment>
<comment type="cofactor">
    <cofactor evidence="1">
        <name>heme b</name>
        <dbReference type="ChEBI" id="CHEBI:60344"/>
    </cofactor>
    <text evidence="1">Binds 1 heme b (iron(II)-protoporphyrin IX) group per dimer.</text>
</comment>
<comment type="subunit">
    <text evidence="1">Homodimer or homotetramer.</text>
</comment>
<comment type="PTM">
    <text evidence="1">Formation of the three residue Trp-Tyr-Met cross-link is important for the catalase, but not the peroxidase activity of the enzyme.</text>
</comment>
<comment type="similarity">
    <text evidence="1">Belongs to the peroxidase family. Peroxidase/catalase subfamily.</text>
</comment>
<feature type="chain" id="PRO_0000354868" description="Catalase-peroxidase">
    <location>
        <begin position="1"/>
        <end position="751"/>
    </location>
</feature>
<feature type="region of interest" description="Disordered" evidence="2">
    <location>
        <begin position="1"/>
        <end position="21"/>
    </location>
</feature>
<feature type="region of interest" description="Disordered" evidence="2">
    <location>
        <begin position="195"/>
        <end position="227"/>
    </location>
</feature>
<feature type="region of interest" description="Disordered" evidence="2">
    <location>
        <begin position="364"/>
        <end position="385"/>
    </location>
</feature>
<feature type="compositionally biased region" description="Basic and acidic residues" evidence="2">
    <location>
        <begin position="214"/>
        <end position="227"/>
    </location>
</feature>
<feature type="active site" description="Proton acceptor" evidence="1">
    <location>
        <position position="91"/>
    </location>
</feature>
<feature type="binding site" description="axial binding residue" evidence="1">
    <location>
        <position position="285"/>
    </location>
    <ligand>
        <name>heme b</name>
        <dbReference type="ChEBI" id="CHEBI:60344"/>
    </ligand>
    <ligandPart>
        <name>Fe</name>
        <dbReference type="ChEBI" id="CHEBI:18248"/>
    </ligandPart>
</feature>
<feature type="site" description="Transition state stabilizer" evidence="1">
    <location>
        <position position="87"/>
    </location>
</feature>
<feature type="cross-link" description="Tryptophyl-tyrosyl-methioninium (Trp-Tyr) (with M-270)" evidence="1">
    <location>
        <begin position="90"/>
        <end position="244"/>
    </location>
</feature>
<feature type="cross-link" description="Tryptophyl-tyrosyl-methioninium (Tyr-Met) (with W-90)" evidence="1">
    <location>
        <begin position="244"/>
        <end position="270"/>
    </location>
</feature>
<dbReference type="EC" id="1.11.1.21" evidence="1"/>
<dbReference type="EMBL" id="AE015451">
    <property type="protein sequence ID" value="AAN69268.1"/>
    <property type="molecule type" value="Genomic_DNA"/>
</dbReference>
<dbReference type="RefSeq" id="NP_745804.1">
    <property type="nucleotide sequence ID" value="NC_002947.4"/>
</dbReference>
<dbReference type="RefSeq" id="WP_010954507.1">
    <property type="nucleotide sequence ID" value="NZ_CP169744.1"/>
</dbReference>
<dbReference type="SMR" id="Q88GQ0"/>
<dbReference type="STRING" id="160488.PP_3668"/>
<dbReference type="PeroxiBase" id="2381">
    <property type="entry name" value="PpuCP01_KT2440"/>
</dbReference>
<dbReference type="PaxDb" id="160488-PP_3668"/>
<dbReference type="KEGG" id="ppu:PP_3668"/>
<dbReference type="PATRIC" id="fig|160488.4.peg.3903"/>
<dbReference type="eggNOG" id="COG0376">
    <property type="taxonomic scope" value="Bacteria"/>
</dbReference>
<dbReference type="HOGENOM" id="CLU_025424_2_0_6"/>
<dbReference type="OrthoDB" id="9759743at2"/>
<dbReference type="PhylomeDB" id="Q88GQ0"/>
<dbReference type="BioCyc" id="PPUT160488:G1G01-3906-MONOMER"/>
<dbReference type="Proteomes" id="UP000000556">
    <property type="component" value="Chromosome"/>
</dbReference>
<dbReference type="GO" id="GO:0005829">
    <property type="term" value="C:cytosol"/>
    <property type="evidence" value="ECO:0007669"/>
    <property type="project" value="TreeGrafter"/>
</dbReference>
<dbReference type="GO" id="GO:0004096">
    <property type="term" value="F:catalase activity"/>
    <property type="evidence" value="ECO:0007669"/>
    <property type="project" value="UniProtKB-UniRule"/>
</dbReference>
<dbReference type="GO" id="GO:0020037">
    <property type="term" value="F:heme binding"/>
    <property type="evidence" value="ECO:0007669"/>
    <property type="project" value="InterPro"/>
</dbReference>
<dbReference type="GO" id="GO:0046872">
    <property type="term" value="F:metal ion binding"/>
    <property type="evidence" value="ECO:0007669"/>
    <property type="project" value="UniProtKB-KW"/>
</dbReference>
<dbReference type="GO" id="GO:0070301">
    <property type="term" value="P:cellular response to hydrogen peroxide"/>
    <property type="evidence" value="ECO:0007669"/>
    <property type="project" value="TreeGrafter"/>
</dbReference>
<dbReference type="GO" id="GO:0042744">
    <property type="term" value="P:hydrogen peroxide catabolic process"/>
    <property type="evidence" value="ECO:0007669"/>
    <property type="project" value="UniProtKB-KW"/>
</dbReference>
<dbReference type="CDD" id="cd00649">
    <property type="entry name" value="catalase_peroxidase_1"/>
    <property type="match status" value="1"/>
</dbReference>
<dbReference type="CDD" id="cd08200">
    <property type="entry name" value="catalase_peroxidase_2"/>
    <property type="match status" value="1"/>
</dbReference>
<dbReference type="FunFam" id="1.10.420.10:FF:000004">
    <property type="entry name" value="Catalase-peroxidase"/>
    <property type="match status" value="1"/>
</dbReference>
<dbReference type="FunFam" id="1.10.520.10:FF:000002">
    <property type="entry name" value="Catalase-peroxidase"/>
    <property type="match status" value="1"/>
</dbReference>
<dbReference type="Gene3D" id="1.10.520.10">
    <property type="match status" value="2"/>
</dbReference>
<dbReference type="Gene3D" id="1.10.420.10">
    <property type="entry name" value="Peroxidase, domain 2"/>
    <property type="match status" value="2"/>
</dbReference>
<dbReference type="HAMAP" id="MF_01961">
    <property type="entry name" value="Catal_peroxid"/>
    <property type="match status" value="1"/>
</dbReference>
<dbReference type="InterPro" id="IPR000763">
    <property type="entry name" value="Catalase_peroxidase"/>
</dbReference>
<dbReference type="InterPro" id="IPR002016">
    <property type="entry name" value="Haem_peroxidase"/>
</dbReference>
<dbReference type="InterPro" id="IPR010255">
    <property type="entry name" value="Haem_peroxidase_sf"/>
</dbReference>
<dbReference type="InterPro" id="IPR019794">
    <property type="entry name" value="Peroxidases_AS"/>
</dbReference>
<dbReference type="InterPro" id="IPR019793">
    <property type="entry name" value="Peroxidases_heam-ligand_BS"/>
</dbReference>
<dbReference type="NCBIfam" id="TIGR00198">
    <property type="entry name" value="cat_per_HPI"/>
    <property type="match status" value="1"/>
</dbReference>
<dbReference type="NCBIfam" id="NF011635">
    <property type="entry name" value="PRK15061.1"/>
    <property type="match status" value="1"/>
</dbReference>
<dbReference type="PANTHER" id="PTHR30555:SF0">
    <property type="entry name" value="CATALASE-PEROXIDASE"/>
    <property type="match status" value="1"/>
</dbReference>
<dbReference type="PANTHER" id="PTHR30555">
    <property type="entry name" value="HYDROPEROXIDASE I, BIFUNCTIONAL CATALASE-PEROXIDASE"/>
    <property type="match status" value="1"/>
</dbReference>
<dbReference type="Pfam" id="PF00141">
    <property type="entry name" value="peroxidase"/>
    <property type="match status" value="2"/>
</dbReference>
<dbReference type="PRINTS" id="PR00460">
    <property type="entry name" value="BPEROXIDASE"/>
</dbReference>
<dbReference type="PRINTS" id="PR00458">
    <property type="entry name" value="PEROXIDASE"/>
</dbReference>
<dbReference type="SUPFAM" id="SSF48113">
    <property type="entry name" value="Heme-dependent peroxidases"/>
    <property type="match status" value="2"/>
</dbReference>
<dbReference type="PROSITE" id="PS00435">
    <property type="entry name" value="PEROXIDASE_1"/>
    <property type="match status" value="1"/>
</dbReference>
<dbReference type="PROSITE" id="PS00436">
    <property type="entry name" value="PEROXIDASE_2"/>
    <property type="match status" value="1"/>
</dbReference>
<dbReference type="PROSITE" id="PS50873">
    <property type="entry name" value="PEROXIDASE_4"/>
    <property type="match status" value="2"/>
</dbReference>
<keyword id="KW-0349">Heme</keyword>
<keyword id="KW-0376">Hydrogen peroxide</keyword>
<keyword id="KW-0408">Iron</keyword>
<keyword id="KW-0479">Metal-binding</keyword>
<keyword id="KW-0560">Oxidoreductase</keyword>
<keyword id="KW-0575">Peroxidase</keyword>
<keyword id="KW-1185">Reference proteome</keyword>